<gene>
    <name type="primary">Amfr</name>
</gene>
<proteinExistence type="evidence at protein level"/>
<evidence type="ECO:0000250" key="1">
    <source>
        <dbReference type="UniProtKB" id="Q9UKV5"/>
    </source>
</evidence>
<evidence type="ECO:0000255" key="2"/>
<evidence type="ECO:0000255" key="3">
    <source>
        <dbReference type="PROSITE-ProRule" id="PRU00175"/>
    </source>
</evidence>
<evidence type="ECO:0000255" key="4">
    <source>
        <dbReference type="PROSITE-ProRule" id="PRU00468"/>
    </source>
</evidence>
<evidence type="ECO:0000256" key="5">
    <source>
        <dbReference type="SAM" id="MobiDB-lite"/>
    </source>
</evidence>
<evidence type="ECO:0000269" key="6">
    <source>
    </source>
</evidence>
<evidence type="ECO:0000269" key="7">
    <source>
    </source>
</evidence>
<evidence type="ECO:0000269" key="8">
    <source>
    </source>
</evidence>
<evidence type="ECO:0000269" key="9">
    <source>
    </source>
</evidence>
<evidence type="ECO:0000269" key="10">
    <source>
    </source>
</evidence>
<evidence type="ECO:0000269" key="11">
    <source>
    </source>
</evidence>
<evidence type="ECO:0000269" key="12">
    <source>
    </source>
</evidence>
<evidence type="ECO:0000303" key="13">
    <source>
    </source>
</evidence>
<evidence type="ECO:0000305" key="14"/>
<evidence type="ECO:0000312" key="15">
    <source>
        <dbReference type="EMBL" id="AAD56721.1"/>
    </source>
</evidence>
<evidence type="ECO:0007744" key="16">
    <source>
    </source>
</evidence>
<accession>Q9R049</accession>
<accession>Q8K008</accession>
<accession>Q99LH5</accession>
<sequence length="643" mass="73105">MPLLFLERFPWPSLRTYTGLSGLALLGTIVSAYRALSQPEDGSGEPEPLTAPLQPEALAPARLTAGGPRARDVAQYLLSDSLFVWVLVNTACCVLMLVAKLIQCIVFGPLRVSERQHLKDKFWNFIFYKFIFIFGVLNVQTVEEVVMWCLWFAGLVFLHLMVQLCKDRFEYLSFSPTTPMSSHGRVLSLLIAMLLSCCGLAVVCCVTGYTHGMHTLAFMAAESLLVTVRTAHVILRYVIHLWDLNHEGTWEGKGTYVYYTDFVMELALLSLDLMHHIHMLLFGNIWLSMASLVIFMQLRYLFHEVQRRIRRHKNYLRVVGNMEARFAVATPEELAVNNDDCAICWDSMQAARKLPCGHLFHNSCLRSWLEQDTSCPTCRMSLNIADGSRAREDHQGENLDENLVPVAAAEGRPRLNQHNHFFHFDGSRIASWLPSFSVEVMHTTNILGITQASNSQLNAMAHQIQEMFPQVPYHLVLQDLQMTRSVEITTDNILEGRIQVPFPTQRSDSLRPALNSPVERPSPDLEEGEASVQTERVPLDLSPRLEETLDFSEVELEPIEVEDFEARGSRFSKSADERQRMLVQRKDDLLQQARKRFLNKSSEDDGASERLLPSEGTSSDPVTLRRRMLAAAAERRLQRQRTT</sequence>
<reference key="1">
    <citation type="journal article" date="1999" name="FEBS Lett.">
        <title>The autocrine motility factor receptor gene encodes a novel type of seven transmembrane protein.</title>
        <authorList>
            <person name="Shimizu K."/>
            <person name="Tani M."/>
            <person name="Watanabe H."/>
            <person name="Nagamachi Y."/>
            <person name="Niinaka Y."/>
            <person name="Shiroishi T."/>
            <person name="Ohwada S."/>
            <person name="Raz A."/>
            <person name="Yokota J."/>
        </authorList>
    </citation>
    <scope>NUCLEOTIDE SEQUENCE [MRNA] (ISOFORM 1)</scope>
    <scope>TISSUE SPECIFICITY</scope>
    <source>
        <tissue>Lung</tissue>
        <tissue>Testis</tissue>
    </source>
</reference>
<reference key="2">
    <citation type="journal article" date="2004" name="Genome Res.">
        <title>The status, quality, and expansion of the NIH full-length cDNA project: the Mammalian Gene Collection (MGC).</title>
        <authorList>
            <consortium name="The MGC Project Team"/>
        </authorList>
    </citation>
    <scope>NUCLEOTIDE SEQUENCE [LARGE SCALE MRNA] (ISOFORM 2)</scope>
    <source>
        <strain>FVB/N</strain>
        <tissue>Colon</tissue>
        <tissue>Mammary gland</tissue>
    </source>
</reference>
<reference key="3">
    <citation type="journal article" date="2003" name="Clin. Exp. Metastasis">
        <title>Overexpression of autocrine motility factor receptor (AMFR) in NIH3T3 fibroblasts induces cell transformation.</title>
        <authorList>
            <person name="Onishi Y."/>
            <person name="Tsukada K."/>
            <person name="Yokota J."/>
            <person name="Raz A."/>
        </authorList>
    </citation>
    <scope>FUNCTION</scope>
</reference>
<reference key="4">
    <citation type="journal article" date="2006" name="J. Biol. Chem.">
        <title>The role of a novel p97/valosin-containing protein-interacting motif of gp78 in endoplasmic reticulum-associated degradation.</title>
        <authorList>
            <person name="Ballar P."/>
            <person name="Shen Y."/>
            <person name="Yang H."/>
            <person name="Fang S."/>
        </authorList>
    </citation>
    <scope>INTERACTION WITH VCP IN THE VCP/P97-AMFR/GP78 COMPLEX</scope>
    <scope>FUNCTION</scope>
    <scope>SUBCELLULAR LOCATION</scope>
    <scope>MOTIF VIM</scope>
</reference>
<reference key="5">
    <citation type="journal article" date="2006" name="Proc. Natl. Acad. Sci. U.S.A.">
        <title>The AAA ATPase p97 links peptide N-glycanase to the endoplasmic reticulum-associated E3 ligase autocrine motility factor receptor.</title>
        <authorList>
            <person name="Li G."/>
            <person name="Zhao G."/>
            <person name="Zhou X."/>
            <person name="Schindelin H."/>
            <person name="Lennarz W.J."/>
        </authorList>
    </citation>
    <scope>INTERACTION WITH NGLY1; PSMC1; SAKS1; RAD23B AND VCP</scope>
</reference>
<reference key="6">
    <citation type="journal article" date="2007" name="Mol. Cell. Proteomics">
        <title>Qualitative and quantitative analyses of protein phosphorylation in naive and stimulated mouse synaptosomal preparations.</title>
        <authorList>
            <person name="Munton R.P."/>
            <person name="Tweedie-Cullen R."/>
            <person name="Livingstone-Zatchej M."/>
            <person name="Weinandy F."/>
            <person name="Waidelich M."/>
            <person name="Longo D."/>
            <person name="Gehrig P."/>
            <person name="Potthast F."/>
            <person name="Rutishauser D."/>
            <person name="Gerrits B."/>
            <person name="Panse C."/>
            <person name="Schlapbach R."/>
            <person name="Mansuy I.M."/>
        </authorList>
    </citation>
    <scope>IDENTIFICATION BY MASS SPECTROMETRY [LARGE SCALE ANALYSIS]</scope>
    <source>
        <tissue>Brain cortex</tissue>
    </source>
</reference>
<reference key="7">
    <citation type="journal article" date="2008" name="Mol. Biol. Cell">
        <title>Gp78 cooperates with RMA1 in endoplasmic reticulum-associated degradation of CFTRDeltaF508.</title>
        <authorList>
            <person name="Morito D."/>
            <person name="Hirao K."/>
            <person name="Oda Y."/>
            <person name="Hosokawa N."/>
            <person name="Tokunaga F."/>
            <person name="Cyr D.M."/>
            <person name="Tanaka K."/>
            <person name="Iwai K."/>
            <person name="Nagata K."/>
        </authorList>
    </citation>
    <scope>FUNCTION IN UBIQUITINATION OF MISFOLDED PROTEINS</scope>
    <scope>INTERACTION WITH RNF5</scope>
    <scope>DOMAIN CUE</scope>
</reference>
<reference key="8">
    <citation type="journal article" date="2009" name="Immunity">
        <title>The phagosomal proteome in interferon-gamma-activated macrophages.</title>
        <authorList>
            <person name="Trost M."/>
            <person name="English L."/>
            <person name="Lemieux S."/>
            <person name="Courcelles M."/>
            <person name="Desjardins M."/>
            <person name="Thibault P."/>
        </authorList>
    </citation>
    <scope>PHOSPHORYLATION [LARGE SCALE ANALYSIS] AT SER-542</scope>
    <scope>IDENTIFICATION BY MASS SPECTROMETRY [LARGE SCALE ANALYSIS]</scope>
</reference>
<reference key="9">
    <citation type="journal article" date="2010" name="Cell">
        <title>A tissue-specific atlas of mouse protein phosphorylation and expression.</title>
        <authorList>
            <person name="Huttlin E.L."/>
            <person name="Jedrychowski M.P."/>
            <person name="Elias J.E."/>
            <person name="Goswami T."/>
            <person name="Rad R."/>
            <person name="Beausoleil S.A."/>
            <person name="Villen J."/>
            <person name="Haas W."/>
            <person name="Sowa M.E."/>
            <person name="Gygi S.P."/>
        </authorList>
    </citation>
    <scope>IDENTIFICATION BY MASS SPECTROMETRY [LARGE SCALE ANALYSIS]</scope>
    <source>
        <tissue>Brain</tissue>
        <tissue>Brown adipose tissue</tissue>
        <tissue>Heart</tissue>
        <tissue>Liver</tissue>
        <tissue>Pancreas</tissue>
        <tissue>Spleen</tissue>
        <tissue>Testis</tissue>
    </source>
</reference>
<reference key="10">
    <citation type="journal article" date="2012" name="Cell Metab.">
        <title>Ablation of gp78 in liver improves hyperlipidemia and insulin resistance by inhibiting SREBP to decrease lipid biosynthesis.</title>
        <authorList>
            <person name="Liu T.F."/>
            <person name="Tang J.J."/>
            <person name="Li P.S."/>
            <person name="Shen Y."/>
            <person name="Li J.G."/>
            <person name="Miao H.H."/>
            <person name="Li B.L."/>
            <person name="Song B.L."/>
        </authorList>
    </citation>
    <scope>FUNCTION</scope>
    <scope>DISRUPTION PHENOTYPE</scope>
</reference>
<reference key="11">
    <citation type="journal article" date="2019" name="Science">
        <title>LMBR1L regulates lymphopoiesis through Wnt/beta-catenin signaling.</title>
        <authorList>
            <person name="Choi J.H."/>
            <person name="Zhong X."/>
            <person name="McAlpine W."/>
            <person name="Liao T.C."/>
            <person name="Zhang D."/>
            <person name="Fang B."/>
            <person name="Russell J."/>
            <person name="Ludwig S."/>
            <person name="Nair-Gill E."/>
            <person name="Zhang Z."/>
            <person name="Wang K.W."/>
            <person name="Misawa T."/>
            <person name="Zhan X."/>
            <person name="Choi M."/>
            <person name="Wang T."/>
            <person name="Li X."/>
            <person name="Tang M."/>
            <person name="Sun Q."/>
            <person name="Yu L."/>
            <person name="Murray A.R."/>
            <person name="Moresco E.M.Y."/>
            <person name="Beutler B."/>
        </authorList>
    </citation>
    <scope>FUNCTION</scope>
    <scope>INTERACTION WITH LMBR1L; UBAC2 AND CTNNB1</scope>
</reference>
<organism evidence="15">
    <name type="scientific">Mus musculus</name>
    <name type="common">Mouse</name>
    <dbReference type="NCBI Taxonomy" id="10090"/>
    <lineage>
        <taxon>Eukaryota</taxon>
        <taxon>Metazoa</taxon>
        <taxon>Chordata</taxon>
        <taxon>Craniata</taxon>
        <taxon>Vertebrata</taxon>
        <taxon>Euteleostomi</taxon>
        <taxon>Mammalia</taxon>
        <taxon>Eutheria</taxon>
        <taxon>Euarchontoglires</taxon>
        <taxon>Glires</taxon>
        <taxon>Rodentia</taxon>
        <taxon>Myomorpha</taxon>
        <taxon>Muroidea</taxon>
        <taxon>Muridae</taxon>
        <taxon>Murinae</taxon>
        <taxon>Mus</taxon>
        <taxon>Mus</taxon>
    </lineage>
</organism>
<keyword id="KW-0025">Alternative splicing</keyword>
<keyword id="KW-0256">Endoplasmic reticulum</keyword>
<keyword id="KW-0449">Lipoprotein</keyword>
<keyword id="KW-0472">Membrane</keyword>
<keyword id="KW-0479">Metal-binding</keyword>
<keyword id="KW-0547">Nucleotide-binding</keyword>
<keyword id="KW-0564">Palmitate</keyword>
<keyword id="KW-0597">Phosphoprotein</keyword>
<keyword id="KW-0675">Receptor</keyword>
<keyword id="KW-1185">Reference proteome</keyword>
<keyword id="KW-0808">Transferase</keyword>
<keyword id="KW-0812">Transmembrane</keyword>
<keyword id="KW-1133">Transmembrane helix</keyword>
<keyword id="KW-0833">Ubl conjugation pathway</keyword>
<keyword id="KW-0879">Wnt signaling pathway</keyword>
<keyword id="KW-0862">Zinc</keyword>
<keyword id="KW-0863">Zinc-finger</keyword>
<dbReference type="EC" id="2.3.2.36" evidence="1"/>
<dbReference type="EMBL" id="AF124144">
    <property type="protein sequence ID" value="AAD56721.1"/>
    <property type="molecule type" value="mRNA"/>
</dbReference>
<dbReference type="EMBL" id="BC003256">
    <property type="protein sequence ID" value="AAH03256.1"/>
    <property type="molecule type" value="mRNA"/>
</dbReference>
<dbReference type="EMBL" id="BC034538">
    <property type="protein sequence ID" value="AAH34538.1"/>
    <property type="molecule type" value="mRNA"/>
</dbReference>
<dbReference type="EMBL" id="BC040338">
    <property type="protein sequence ID" value="AAH40338.1"/>
    <property type="molecule type" value="mRNA"/>
</dbReference>
<dbReference type="CCDS" id="CCDS22533.1">
    <molecule id="Q9R049-2"/>
</dbReference>
<dbReference type="RefSeq" id="NP_035917.2">
    <molecule id="Q9R049-2"/>
    <property type="nucleotide sequence ID" value="NM_011787.3"/>
</dbReference>
<dbReference type="BMRB" id="Q9R049"/>
<dbReference type="SMR" id="Q9R049"/>
<dbReference type="BioGRID" id="204722">
    <property type="interactions" value="23"/>
</dbReference>
<dbReference type="CORUM" id="Q9R049"/>
<dbReference type="FunCoup" id="Q9R049">
    <property type="interactions" value="1177"/>
</dbReference>
<dbReference type="IntAct" id="Q9R049">
    <property type="interactions" value="6"/>
</dbReference>
<dbReference type="MINT" id="Q9R049"/>
<dbReference type="STRING" id="10090.ENSMUSP00000052258"/>
<dbReference type="iPTMnet" id="Q9R049"/>
<dbReference type="PhosphoSitePlus" id="Q9R049"/>
<dbReference type="SwissPalm" id="Q9R049"/>
<dbReference type="jPOST" id="Q9R049"/>
<dbReference type="PaxDb" id="10090-ENSMUSP00000052258"/>
<dbReference type="ProteomicsDB" id="296400">
    <molecule id="Q9R049-1"/>
</dbReference>
<dbReference type="ProteomicsDB" id="296401">
    <molecule id="Q9R049-2"/>
</dbReference>
<dbReference type="Pumba" id="Q9R049"/>
<dbReference type="Antibodypedia" id="14770">
    <property type="antibodies" value="289 antibodies from 31 providers"/>
</dbReference>
<dbReference type="DNASU" id="23802"/>
<dbReference type="Ensembl" id="ENSMUST00000053766.14">
    <molecule id="Q9R049-2"/>
    <property type="protein sequence ID" value="ENSMUSP00000052258.7"/>
    <property type="gene ID" value="ENSMUSG00000031751.15"/>
</dbReference>
<dbReference type="GeneID" id="23802"/>
<dbReference type="KEGG" id="mmu:23802"/>
<dbReference type="AGR" id="MGI:1345634"/>
<dbReference type="CTD" id="267"/>
<dbReference type="MGI" id="MGI:1345634">
    <property type="gene designation" value="Amfr"/>
</dbReference>
<dbReference type="VEuPathDB" id="HostDB:ENSMUSG00000031751"/>
<dbReference type="eggNOG" id="KOG0802">
    <property type="taxonomic scope" value="Eukaryota"/>
</dbReference>
<dbReference type="GeneTree" id="ENSGT00940000156482"/>
<dbReference type="HOGENOM" id="CLU_015061_0_0_1"/>
<dbReference type="InParanoid" id="Q9R049"/>
<dbReference type="OMA" id="EWKINAT"/>
<dbReference type="OrthoDB" id="3824970at2759"/>
<dbReference type="PhylomeDB" id="Q9R049"/>
<dbReference type="TreeFam" id="TF320052"/>
<dbReference type="Reactome" id="R-MMU-532668">
    <property type="pathway name" value="N-glycan trimming in the ER and Calnexin/Calreticulin cycle"/>
</dbReference>
<dbReference type="UniPathway" id="UPA00143"/>
<dbReference type="BioGRID-ORCS" id="23802">
    <property type="hits" value="5 hits in 76 CRISPR screens"/>
</dbReference>
<dbReference type="ChiTaRS" id="Amfr">
    <property type="organism name" value="mouse"/>
</dbReference>
<dbReference type="PRO" id="PR:Q9R049"/>
<dbReference type="Proteomes" id="UP000000589">
    <property type="component" value="Chromosome 8"/>
</dbReference>
<dbReference type="RNAct" id="Q9R049">
    <property type="molecule type" value="protein"/>
</dbReference>
<dbReference type="Bgee" id="ENSMUSG00000031751">
    <property type="expression patterns" value="Expressed in spermatocyte and 269 other cell types or tissues"/>
</dbReference>
<dbReference type="ExpressionAtlas" id="Q9R049">
    <property type="expression patterns" value="baseline and differential"/>
</dbReference>
<dbReference type="GO" id="GO:0030425">
    <property type="term" value="C:dendrite"/>
    <property type="evidence" value="ECO:0007669"/>
    <property type="project" value="Ensembl"/>
</dbReference>
<dbReference type="GO" id="GO:0036513">
    <property type="term" value="C:Derlin-1 retrotranslocation complex"/>
    <property type="evidence" value="ECO:0007669"/>
    <property type="project" value="Ensembl"/>
</dbReference>
<dbReference type="GO" id="GO:0005783">
    <property type="term" value="C:endoplasmic reticulum"/>
    <property type="evidence" value="ECO:0000250"/>
    <property type="project" value="UniProtKB"/>
</dbReference>
<dbReference type="GO" id="GO:0005789">
    <property type="term" value="C:endoplasmic reticulum membrane"/>
    <property type="evidence" value="ECO:0000250"/>
    <property type="project" value="UniProtKB"/>
</dbReference>
<dbReference type="GO" id="GO:0005794">
    <property type="term" value="C:Golgi apparatus"/>
    <property type="evidence" value="ECO:0007669"/>
    <property type="project" value="Ensembl"/>
</dbReference>
<dbReference type="GO" id="GO:0030426">
    <property type="term" value="C:growth cone"/>
    <property type="evidence" value="ECO:0007669"/>
    <property type="project" value="Ensembl"/>
</dbReference>
<dbReference type="GO" id="GO:0043025">
    <property type="term" value="C:neuronal cell body"/>
    <property type="evidence" value="ECO:0007669"/>
    <property type="project" value="Ensembl"/>
</dbReference>
<dbReference type="GO" id="GO:0048471">
    <property type="term" value="C:perinuclear region of cytoplasm"/>
    <property type="evidence" value="ECO:0007669"/>
    <property type="project" value="Ensembl"/>
</dbReference>
<dbReference type="GO" id="GO:0005886">
    <property type="term" value="C:plasma membrane"/>
    <property type="evidence" value="ECO:0000250"/>
    <property type="project" value="MGI"/>
</dbReference>
<dbReference type="GO" id="GO:0032991">
    <property type="term" value="C:protein-containing complex"/>
    <property type="evidence" value="ECO:0000266"/>
    <property type="project" value="MGI"/>
</dbReference>
<dbReference type="GO" id="GO:1904288">
    <property type="term" value="F:BAT3 complex binding"/>
    <property type="evidence" value="ECO:0007669"/>
    <property type="project" value="Ensembl"/>
</dbReference>
<dbReference type="GO" id="GO:0042802">
    <property type="term" value="F:identical protein binding"/>
    <property type="evidence" value="ECO:0007669"/>
    <property type="project" value="Ensembl"/>
</dbReference>
<dbReference type="GO" id="GO:0000166">
    <property type="term" value="F:nucleotide binding"/>
    <property type="evidence" value="ECO:0007669"/>
    <property type="project" value="UniProtKB-KW"/>
</dbReference>
<dbReference type="GO" id="GO:0051087">
    <property type="term" value="F:protein-folding chaperone binding"/>
    <property type="evidence" value="ECO:0007669"/>
    <property type="project" value="Ensembl"/>
</dbReference>
<dbReference type="GO" id="GO:0030674">
    <property type="term" value="F:protein-macromolecule adaptor activity"/>
    <property type="evidence" value="ECO:0007669"/>
    <property type="project" value="Ensembl"/>
</dbReference>
<dbReference type="GO" id="GO:0038023">
    <property type="term" value="F:signaling receptor activity"/>
    <property type="evidence" value="ECO:0007669"/>
    <property type="project" value="Ensembl"/>
</dbReference>
<dbReference type="GO" id="GO:0043130">
    <property type="term" value="F:ubiquitin binding"/>
    <property type="evidence" value="ECO:0007669"/>
    <property type="project" value="InterPro"/>
</dbReference>
<dbReference type="GO" id="GO:0061630">
    <property type="term" value="F:ubiquitin protein ligase activity"/>
    <property type="evidence" value="ECO:0000250"/>
    <property type="project" value="UniProtKB"/>
</dbReference>
<dbReference type="GO" id="GO:0004842">
    <property type="term" value="F:ubiquitin-protein transferase activity"/>
    <property type="evidence" value="ECO:0000250"/>
    <property type="project" value="UniProtKB"/>
</dbReference>
<dbReference type="GO" id="GO:1990381">
    <property type="term" value="F:ubiquitin-specific protease binding"/>
    <property type="evidence" value="ECO:0007669"/>
    <property type="project" value="Ensembl"/>
</dbReference>
<dbReference type="GO" id="GO:0034450">
    <property type="term" value="F:ubiquitin-ubiquitin ligase activity"/>
    <property type="evidence" value="ECO:0007669"/>
    <property type="project" value="Ensembl"/>
</dbReference>
<dbReference type="GO" id="GO:0008270">
    <property type="term" value="F:zinc ion binding"/>
    <property type="evidence" value="ECO:0007669"/>
    <property type="project" value="UniProtKB-KW"/>
</dbReference>
<dbReference type="GO" id="GO:0030968">
    <property type="term" value="P:endoplasmic reticulum unfolded protein response"/>
    <property type="evidence" value="ECO:0007669"/>
    <property type="project" value="Ensembl"/>
</dbReference>
<dbReference type="GO" id="GO:0036503">
    <property type="term" value="P:ERAD pathway"/>
    <property type="evidence" value="ECO:0000250"/>
    <property type="project" value="UniProtKB"/>
</dbReference>
<dbReference type="GO" id="GO:0007611">
    <property type="term" value="P:learning or memory"/>
    <property type="evidence" value="ECO:0007669"/>
    <property type="project" value="Ensembl"/>
</dbReference>
<dbReference type="GO" id="GO:0090090">
    <property type="term" value="P:negative regulation of canonical Wnt signaling pathway"/>
    <property type="evidence" value="ECO:0000315"/>
    <property type="project" value="UniProtKB"/>
</dbReference>
<dbReference type="GO" id="GO:0038061">
    <property type="term" value="P:non-canonical NF-kappaB signal transduction"/>
    <property type="evidence" value="ECO:0007669"/>
    <property type="project" value="Ensembl"/>
</dbReference>
<dbReference type="GO" id="GO:0051865">
    <property type="term" value="P:protein autoubiquitination"/>
    <property type="evidence" value="ECO:0007669"/>
    <property type="project" value="Ensembl"/>
</dbReference>
<dbReference type="GO" id="GO:0044314">
    <property type="term" value="P:protein K27-linked ubiquitination"/>
    <property type="evidence" value="ECO:0007669"/>
    <property type="project" value="Ensembl"/>
</dbReference>
<dbReference type="GO" id="GO:0070936">
    <property type="term" value="P:protein K48-linked ubiquitination"/>
    <property type="evidence" value="ECO:0007669"/>
    <property type="project" value="Ensembl"/>
</dbReference>
<dbReference type="GO" id="GO:0000209">
    <property type="term" value="P:protein polyubiquitination"/>
    <property type="evidence" value="ECO:0000250"/>
    <property type="project" value="UniProtKB"/>
</dbReference>
<dbReference type="GO" id="GO:2000638">
    <property type="term" value="P:regulation of SREBP signaling pathway"/>
    <property type="evidence" value="ECO:0000315"/>
    <property type="project" value="UniProtKB"/>
</dbReference>
<dbReference type="GO" id="GO:0006511">
    <property type="term" value="P:ubiquitin-dependent protein catabolic process"/>
    <property type="evidence" value="ECO:0007669"/>
    <property type="project" value="Ensembl"/>
</dbReference>
<dbReference type="GO" id="GO:0016055">
    <property type="term" value="P:Wnt signaling pathway"/>
    <property type="evidence" value="ECO:0007669"/>
    <property type="project" value="UniProtKB-KW"/>
</dbReference>
<dbReference type="CDD" id="cd14421">
    <property type="entry name" value="CUE_AMFR"/>
    <property type="match status" value="1"/>
</dbReference>
<dbReference type="CDD" id="cd16455">
    <property type="entry name" value="RING-H2_AMFR"/>
    <property type="match status" value="1"/>
</dbReference>
<dbReference type="FunFam" id="1.10.8.10:FF:000026">
    <property type="entry name" value="E3 ubiquitin-protein ligase AMFR"/>
    <property type="match status" value="1"/>
</dbReference>
<dbReference type="FunFam" id="3.30.40.10:FF:000149">
    <property type="entry name" value="E3 ubiquitin-protein ligase AMFR"/>
    <property type="match status" value="1"/>
</dbReference>
<dbReference type="Gene3D" id="1.10.8.10">
    <property type="entry name" value="DNA helicase RuvA subunit, C-terminal domain"/>
    <property type="match status" value="1"/>
</dbReference>
<dbReference type="Gene3D" id="3.30.40.10">
    <property type="entry name" value="Zinc/RING finger domain, C3HC4 (zinc finger)"/>
    <property type="match status" value="1"/>
</dbReference>
<dbReference type="InterPro" id="IPR040675">
    <property type="entry name" value="AMFR_Ube2g2-bd"/>
</dbReference>
<dbReference type="InterPro" id="IPR003892">
    <property type="entry name" value="CUE"/>
</dbReference>
<dbReference type="InterPro" id="IPR001841">
    <property type="entry name" value="Znf_RING"/>
</dbReference>
<dbReference type="InterPro" id="IPR013083">
    <property type="entry name" value="Znf_RING/FYVE/PHD"/>
</dbReference>
<dbReference type="PANTHER" id="PTHR15067:SF5">
    <property type="entry name" value="E3 UBIQUITIN-PROTEIN LIGASE AMFR"/>
    <property type="match status" value="1"/>
</dbReference>
<dbReference type="PANTHER" id="PTHR15067">
    <property type="entry name" value="E3 UBIQUITIN-PROTEIN LIGASE RNF8"/>
    <property type="match status" value="1"/>
</dbReference>
<dbReference type="Pfam" id="PF02845">
    <property type="entry name" value="CUE"/>
    <property type="match status" value="1"/>
</dbReference>
<dbReference type="Pfam" id="PF18442">
    <property type="entry name" value="G2BR"/>
    <property type="match status" value="1"/>
</dbReference>
<dbReference type="Pfam" id="PF13639">
    <property type="entry name" value="zf-RING_2"/>
    <property type="match status" value="1"/>
</dbReference>
<dbReference type="SMART" id="SM00546">
    <property type="entry name" value="CUE"/>
    <property type="match status" value="1"/>
</dbReference>
<dbReference type="SMART" id="SM00184">
    <property type="entry name" value="RING"/>
    <property type="match status" value="1"/>
</dbReference>
<dbReference type="SUPFAM" id="SSF57850">
    <property type="entry name" value="RING/U-box"/>
    <property type="match status" value="1"/>
</dbReference>
<dbReference type="PROSITE" id="PS51140">
    <property type="entry name" value="CUE"/>
    <property type="match status" value="1"/>
</dbReference>
<dbReference type="PROSITE" id="PS50089">
    <property type="entry name" value="ZF_RING_2"/>
    <property type="match status" value="1"/>
</dbReference>
<comment type="function">
    <text evidence="1 7 9 10 11 12">E3 ubiquitin-protein ligase that mediates the polyubiquitination of lysine and cysteine residues on target proteins, such as CD3D, CYP3A4, CFTR, INSIG1, SOAT2/ACAT2 and APOB for proteasomal degradation (PubMed:16987818, PubMed:18216283). Component of a VCP/p97-AMFR/gp78 complex that participates in the final step of endoplasmic reticulum-associated degradation (ERAD) (PubMed:16987818, PubMed:18216283). The VCP/p97-AMFR/gp78 complex is involved in the sterol-accelerated ERAD degradation of HMGCR through binding to the HMGCR-INSIG1 complex at the ER membrane (PubMed:22863805). In addition, interaction of AMFR with AUP1 facilitates interaction of AMFR with ubiquitin-conjugating enzyme UBE2G2 and ubiquitin ligase RNF139, leading to sterol-induced HMGCR ubiquitination (By similarity). The ubiquitinated HMGCR is then released from the ER by the complex into the cytosol for subsequent destruction (By similarity). In addition to ubiquitination on lysine residues, catalyzes ubiquitination on cysteine residues: together with INSIG1, mediates polyubiquitination of SOAT2/ACAT2 at 'Cys-277', leading to its degradation when the lipid levels are low (By similarity). Catalyzes ubiquitination and subsequent degradation of INSIG1 when cells are depleted of sterols (By similarity). Mediates polyubiquitination of INSIG2 at 'Cys-215' in some tissues, leading to its degradation (By similarity). Also regulates ERAD through the ubiquitination of UBL4A a component of the BAG6/BAT3 complex (By similarity). Also acts as a scaffold protein to assemble a complex that couples ubiquitination, retranslocation and deglycosylation (By similarity). Mediates tumor invasion and metastasis as a receptor for the GPI/autocrine motility factor (PubMed:12650607). In association with LMBR1L and UBAC2, negatively regulates the canonical Wnt signaling pathway in the lymphocytes by promoting the ubiquitin-mediated degradation of CTNNB1 and Wnt receptors FZD6 and LRP6 (PubMed:31073040). Regulates NF-kappa-B and MAPK signaling pathways by mediating 'Lys-27'-linked polyubiquitination of TAB3 and promoting subsequent TAK1/MAP3K7 activation (By similarity).</text>
</comment>
<comment type="catalytic activity">
    <reaction evidence="1">
        <text>[E2 ubiquitin-conjugating enzyme]-S-ubiquitinyl-L-cysteine + [acceptor protein]-L-cysteine = [E2 ubiquitin-conjugating enzyme]-L-cysteine + [acceptor protein]-S-ubiquitinyl-L-cysteine.</text>
        <dbReference type="EC" id="2.3.2.36"/>
    </reaction>
</comment>
<comment type="pathway">
    <text>Protein modification; protein ubiquitination.</text>
</comment>
<comment type="subunit">
    <text evidence="1 8 9 10 12">Interacts with RNF5. Also forms an ERAD complex containing VCP/p97, NGLY1; PSMC1; SAKS1 and RAD23B required for coupling retrotranslocation, ubiquitination and deglycosylation. Interacts with DERL1. Interacts (through a region distinct from the RING finger) with UBE2G2/UBC7. Component of the VCP/p97-AMFR/gp78 complex that enhances VCP/p97 binding to polyubiquitinated proteins for their degradation by the endoplasmic reticulum-associated degradation (ERAD) pathway. Interacts (via the VIM) with VCP/p97. Interacts (via its membrane domain) with INSIG1; the interaction initiates the sterol-mediated ubiquitination and degradation of HMGCR by the ERAD pathway. Interacts with AUP1, UBE2G2 and RNF139/TRC8; interaction with AUP1 facilitates interaction of AMFR with ubiquitin-conjugating enzyme UBE2G2 and ubiquitin ligase RNF139, leading to sterol-induced ubiquitination of HNGCR and its subsequent proteasomal degradation (By similarity). Interacts with BAG6. Interacts with USP13 (via UBA 2 domain); the interaction is direct (By similarity). Interacts with LMBR1L, UBAC2 and CTNNB1 (PubMed:31073040). Interacts with C18orf32 (By similarity).</text>
</comment>
<comment type="interaction">
    <interactant intactId="EBI-3648125">
        <id>Q9R049</id>
    </interactant>
    <interactant intactId="EBI-3648128">
        <id>Q9JI78</id>
        <label>Ngly1</label>
    </interactant>
    <organismsDiffer>false</organismsDiffer>
    <experiments>5</experiments>
</comment>
<comment type="interaction">
    <interactant intactId="EBI-3648125">
        <id>Q9R049</id>
    </interactant>
    <interactant intactId="EBI-80597">
        <id>Q01853</id>
        <label>Vcp</label>
    </interactant>
    <organismsDiffer>false</organismsDiffer>
    <experiments>4</experiments>
</comment>
<comment type="subcellular location">
    <subcellularLocation>
        <location evidence="9">Endoplasmic reticulum membrane</location>
        <topology evidence="2">Multi-pass membrane protein</topology>
    </subcellularLocation>
    <text evidence="1">Palmitoylation promotes localization to the peripheral endoplasmic reticulum.</text>
</comment>
<comment type="alternative products">
    <event type="alternative splicing"/>
    <isoform>
        <id>Q9R049-1</id>
        <name evidence="6">1</name>
        <sequence type="displayed"/>
    </isoform>
    <isoform>
        <id>Q9R049-2</id>
        <name evidence="14">2</name>
        <sequence type="described" ref="VSP_008224"/>
    </isoform>
</comment>
<comment type="tissue specificity">
    <text evidence="6">Expressed in heart, brain, liver, lung, skeletal muscle, kidney and testis. Not detected in spleen.</text>
</comment>
<comment type="domain">
    <text evidence="10">The CUE domain is required for recognition of misfolded proteins such as mutant CFTR.</text>
</comment>
<comment type="domain">
    <text evidence="9">The VCP/p97-interacting motif (VIM) is sufficient for binding VCP/p97 to form a complex capable of transferring VCP/p97 from the cytosol to microsomes.</text>
</comment>
<comment type="PTM">
    <text evidence="1">Palmitoylation of the RING-type zing finger by ZDHHC6 promotes localization to the peripheral endoplasmic reticulum.</text>
</comment>
<comment type="disruption phenotype">
    <text evidence="11">Mice with a conditional deletion in the liver display improved hyperlipidemia and insulin resistance: mice show elevated energy expenditure and are resistant to diet-induced obesity and glucose intolerance (PubMed:22863805). Increased stability of Hmgcr, Insig1 and Insig2 and suppression of the SREBP pathway and novo lipid biosynthesis (PubMed:22863805).</text>
</comment>
<feature type="chain" id="PRO_0000064580" description="E3 ubiquitin-protein ligase AMFR">
    <location>
        <begin position="1"/>
        <end position="643"/>
    </location>
</feature>
<feature type="transmembrane region" description="Helical" evidence="2">
    <location>
        <begin position="82"/>
        <end position="102"/>
    </location>
</feature>
<feature type="transmembrane region" description="Helical" evidence="2">
    <location>
        <begin position="122"/>
        <end position="142"/>
    </location>
</feature>
<feature type="transmembrane region" description="Helical" evidence="2">
    <location>
        <begin position="186"/>
        <end position="206"/>
    </location>
</feature>
<feature type="transmembrane region" description="Helical" evidence="2">
    <location>
        <begin position="215"/>
        <end position="235"/>
    </location>
</feature>
<feature type="transmembrane region" description="Helical" evidence="2">
    <location>
        <begin position="254"/>
        <end position="274"/>
    </location>
</feature>
<feature type="transmembrane region" description="Helical" evidence="2">
    <location>
        <begin position="276"/>
        <end position="296"/>
    </location>
</feature>
<feature type="transmembrane region" description="Helical" evidence="2">
    <location>
        <begin position="429"/>
        <end position="449"/>
    </location>
</feature>
<feature type="domain" description="CUE" evidence="4">
    <location>
        <begin position="456"/>
        <end position="498"/>
    </location>
</feature>
<feature type="zinc finger region" description="RING-type" evidence="3">
    <location>
        <begin position="341"/>
        <end position="379"/>
    </location>
</feature>
<feature type="region of interest" description="Disordered" evidence="5">
    <location>
        <begin position="504"/>
        <end position="535"/>
    </location>
</feature>
<feature type="region of interest" description="Disordered" evidence="5">
    <location>
        <begin position="598"/>
        <end position="624"/>
    </location>
</feature>
<feature type="region of interest" description="VCP/p97-interacting motif (VIM)" evidence="1">
    <location>
        <begin position="622"/>
        <end position="640"/>
    </location>
</feature>
<feature type="modified residue" description="Phosphoserine" evidence="1">
    <location>
        <position position="516"/>
    </location>
</feature>
<feature type="modified residue" description="Phosphoserine" evidence="16">
    <location>
        <position position="542"/>
    </location>
</feature>
<feature type="splice variant" id="VSP_008224" description="In isoform 2." evidence="13">
    <location>
        <begin position="57"/>
        <end position="60"/>
    </location>
</feature>
<feature type="sequence conflict" description="In Ref. 1; AAD56721." evidence="14" ref="1">
    <original>R</original>
    <variation>S</variation>
    <location>
        <position position="412"/>
    </location>
</feature>
<name>AMFR_MOUSE</name>
<protein>
    <recommendedName>
        <fullName>E3 ubiquitin-protein ligase AMFR</fullName>
        <ecNumber evidence="1">2.3.2.36</ecNumber>
    </recommendedName>
    <alternativeName>
        <fullName>Autocrine motility factor receptor</fullName>
        <shortName>AMF receptor</shortName>
    </alternativeName>
    <alternativeName>
        <fullName evidence="14">RING-type E3 ubiquitin transferase AMFR</fullName>
    </alternativeName>
</protein>